<organism>
    <name type="scientific">Finegoldia magna (strain ATCC 29328 / DSM 20472 / WAL 2508)</name>
    <name type="common">Peptostreptococcus magnus</name>
    <dbReference type="NCBI Taxonomy" id="334413"/>
    <lineage>
        <taxon>Bacteria</taxon>
        <taxon>Bacillati</taxon>
        <taxon>Bacillota</taxon>
        <taxon>Tissierellia</taxon>
        <taxon>Tissierellales</taxon>
        <taxon>Peptoniphilaceae</taxon>
        <taxon>Finegoldia</taxon>
    </lineage>
</organism>
<accession>B0S169</accession>
<feature type="chain" id="PRO_1000098572" description="Threonine--tRNA ligase">
    <location>
        <begin position="1"/>
        <end position="634"/>
    </location>
</feature>
<feature type="domain" description="TGS" evidence="2">
    <location>
        <begin position="1"/>
        <end position="61"/>
    </location>
</feature>
<feature type="region of interest" description="Catalytic" evidence="1">
    <location>
        <begin position="242"/>
        <end position="532"/>
    </location>
</feature>
<feature type="binding site" evidence="1">
    <location>
        <position position="333"/>
    </location>
    <ligand>
        <name>Zn(2+)</name>
        <dbReference type="ChEBI" id="CHEBI:29105"/>
    </ligand>
</feature>
<feature type="binding site" evidence="1">
    <location>
        <position position="384"/>
    </location>
    <ligand>
        <name>Zn(2+)</name>
        <dbReference type="ChEBI" id="CHEBI:29105"/>
    </ligand>
</feature>
<feature type="binding site" evidence="1">
    <location>
        <position position="509"/>
    </location>
    <ligand>
        <name>Zn(2+)</name>
        <dbReference type="ChEBI" id="CHEBI:29105"/>
    </ligand>
</feature>
<keyword id="KW-0030">Aminoacyl-tRNA synthetase</keyword>
<keyword id="KW-0067">ATP-binding</keyword>
<keyword id="KW-0963">Cytoplasm</keyword>
<keyword id="KW-0436">Ligase</keyword>
<keyword id="KW-0479">Metal-binding</keyword>
<keyword id="KW-0547">Nucleotide-binding</keyword>
<keyword id="KW-0648">Protein biosynthesis</keyword>
<keyword id="KW-1185">Reference proteome</keyword>
<keyword id="KW-0694">RNA-binding</keyword>
<keyword id="KW-0820">tRNA-binding</keyword>
<keyword id="KW-0862">Zinc</keyword>
<reference key="1">
    <citation type="journal article" date="2008" name="DNA Res.">
        <title>Complete genome sequence of Finegoldia magna, an anaerobic opportunistic pathogen.</title>
        <authorList>
            <person name="Goto T."/>
            <person name="Yamashita A."/>
            <person name="Hirakawa H."/>
            <person name="Matsutani M."/>
            <person name="Todo K."/>
            <person name="Ohshima K."/>
            <person name="Toh H."/>
            <person name="Miyamoto K."/>
            <person name="Kuhara S."/>
            <person name="Hattori M."/>
            <person name="Shimizu T."/>
            <person name="Akimoto S."/>
        </authorList>
    </citation>
    <scope>NUCLEOTIDE SEQUENCE [LARGE SCALE GENOMIC DNA]</scope>
    <source>
        <strain>ATCC 29328 / DSM 20472 / WAL 2508</strain>
    </source>
</reference>
<comment type="function">
    <text evidence="1">Catalyzes the attachment of threonine to tRNA(Thr) in a two-step reaction: L-threonine is first activated by ATP to form Thr-AMP and then transferred to the acceptor end of tRNA(Thr). Also edits incorrectly charged L-seryl-tRNA(Thr).</text>
</comment>
<comment type="catalytic activity">
    <reaction evidence="1">
        <text>tRNA(Thr) + L-threonine + ATP = L-threonyl-tRNA(Thr) + AMP + diphosphate + H(+)</text>
        <dbReference type="Rhea" id="RHEA:24624"/>
        <dbReference type="Rhea" id="RHEA-COMP:9670"/>
        <dbReference type="Rhea" id="RHEA-COMP:9704"/>
        <dbReference type="ChEBI" id="CHEBI:15378"/>
        <dbReference type="ChEBI" id="CHEBI:30616"/>
        <dbReference type="ChEBI" id="CHEBI:33019"/>
        <dbReference type="ChEBI" id="CHEBI:57926"/>
        <dbReference type="ChEBI" id="CHEBI:78442"/>
        <dbReference type="ChEBI" id="CHEBI:78534"/>
        <dbReference type="ChEBI" id="CHEBI:456215"/>
        <dbReference type="EC" id="6.1.1.3"/>
    </reaction>
</comment>
<comment type="cofactor">
    <cofactor evidence="1">
        <name>Zn(2+)</name>
        <dbReference type="ChEBI" id="CHEBI:29105"/>
    </cofactor>
    <text evidence="1">Binds 1 zinc ion per subunit.</text>
</comment>
<comment type="subunit">
    <text evidence="1">Homodimer.</text>
</comment>
<comment type="subcellular location">
    <subcellularLocation>
        <location evidence="1">Cytoplasm</location>
    </subcellularLocation>
</comment>
<comment type="similarity">
    <text evidence="1">Belongs to the class-II aminoacyl-tRNA synthetase family.</text>
</comment>
<sequence length="634" mass="73294">MFEVKLKDGSAKEFDGEISLLDVCKSISEGLARDCVGAVVDGKIMGLMETIDSDCEVQFVKFDDDEGKQVFWHTSSHLMAYAIQRLYPGTKFAIGPSIDSGFYYDLDTDHKFVPEDLEKIEAEMKKIVKENPKLVRVEISRKEALERFKNEGQDYKVDLIENFDEDATITLYEMGDFVDLCRGPHLLDVKNIKAFKLLSIAGAYWRGDENNKMLQRIYGISFPKKKLLDEYLDRMEEAKKRDHRKIGKEMGLFSIQEEGPGFPFFHPNGMVVLNELEKFLKEQLLERGYGQIKTPLILNEHLWHQSGHWDHYKENMYFTKIDGEDYAIKPMNCPGSILVYKDELHSYRELPIKVAELGQVHRHELSGALHGLFRVRTFVQDDAHVFCLPEQIEEEVSKTIDFCDYIYSKFGFKYEVELSTRPEDSMGSDEDWDLAISSLKNALEHKGLPYKINEGDGAFYGPKIDFHLEDAIGRTWQCGTIQLDFQMPERFDMTYIASDGSKKRPAMIHRAILGSEERFMGILIEHYAGKFPLWLSPVQVEILPISDKFNDYAYELQQKMKARGLRVKVDDRSEKIGLKIRESQLKKVNYSLIIGQNEIDNNEVSVRKRDIGDVGSKNTDEFINELVDEYQNRK</sequence>
<dbReference type="EC" id="6.1.1.3" evidence="1"/>
<dbReference type="EMBL" id="AP008971">
    <property type="protein sequence ID" value="BAG08109.1"/>
    <property type="molecule type" value="Genomic_DNA"/>
</dbReference>
<dbReference type="RefSeq" id="WP_012290568.1">
    <property type="nucleotide sequence ID" value="NC_010376.1"/>
</dbReference>
<dbReference type="SMR" id="B0S169"/>
<dbReference type="STRING" id="334413.FMG_0691"/>
<dbReference type="KEGG" id="fma:FMG_0691"/>
<dbReference type="eggNOG" id="COG0441">
    <property type="taxonomic scope" value="Bacteria"/>
</dbReference>
<dbReference type="HOGENOM" id="CLU_008554_0_1_9"/>
<dbReference type="Proteomes" id="UP000001319">
    <property type="component" value="Chromosome"/>
</dbReference>
<dbReference type="GO" id="GO:0005737">
    <property type="term" value="C:cytoplasm"/>
    <property type="evidence" value="ECO:0007669"/>
    <property type="project" value="UniProtKB-SubCell"/>
</dbReference>
<dbReference type="GO" id="GO:0005524">
    <property type="term" value="F:ATP binding"/>
    <property type="evidence" value="ECO:0007669"/>
    <property type="project" value="UniProtKB-UniRule"/>
</dbReference>
<dbReference type="GO" id="GO:0140096">
    <property type="term" value="F:catalytic activity, acting on a protein"/>
    <property type="evidence" value="ECO:0007669"/>
    <property type="project" value="UniProtKB-ARBA"/>
</dbReference>
<dbReference type="GO" id="GO:0046872">
    <property type="term" value="F:metal ion binding"/>
    <property type="evidence" value="ECO:0007669"/>
    <property type="project" value="UniProtKB-KW"/>
</dbReference>
<dbReference type="GO" id="GO:0004829">
    <property type="term" value="F:threonine-tRNA ligase activity"/>
    <property type="evidence" value="ECO:0007669"/>
    <property type="project" value="UniProtKB-UniRule"/>
</dbReference>
<dbReference type="GO" id="GO:0016740">
    <property type="term" value="F:transferase activity"/>
    <property type="evidence" value="ECO:0007669"/>
    <property type="project" value="UniProtKB-ARBA"/>
</dbReference>
<dbReference type="GO" id="GO:0000049">
    <property type="term" value="F:tRNA binding"/>
    <property type="evidence" value="ECO:0007669"/>
    <property type="project" value="UniProtKB-KW"/>
</dbReference>
<dbReference type="GO" id="GO:0006435">
    <property type="term" value="P:threonyl-tRNA aminoacylation"/>
    <property type="evidence" value="ECO:0007669"/>
    <property type="project" value="UniProtKB-UniRule"/>
</dbReference>
<dbReference type="CDD" id="cd01667">
    <property type="entry name" value="TGS_ThrRS"/>
    <property type="match status" value="1"/>
</dbReference>
<dbReference type="CDD" id="cd00860">
    <property type="entry name" value="ThrRS_anticodon"/>
    <property type="match status" value="1"/>
</dbReference>
<dbReference type="CDD" id="cd00771">
    <property type="entry name" value="ThrRS_core"/>
    <property type="match status" value="1"/>
</dbReference>
<dbReference type="FunFam" id="3.30.54.20:FF:000002">
    <property type="entry name" value="Threonine--tRNA ligase"/>
    <property type="match status" value="1"/>
</dbReference>
<dbReference type="FunFam" id="3.30.930.10:FF:000002">
    <property type="entry name" value="Threonine--tRNA ligase"/>
    <property type="match status" value="1"/>
</dbReference>
<dbReference type="FunFam" id="3.40.50.800:FF:000001">
    <property type="entry name" value="Threonine--tRNA ligase"/>
    <property type="match status" value="1"/>
</dbReference>
<dbReference type="FunFam" id="3.30.980.10:FF:000005">
    <property type="entry name" value="Threonyl-tRNA synthetase, mitochondrial"/>
    <property type="match status" value="1"/>
</dbReference>
<dbReference type="Gene3D" id="3.10.20.30">
    <property type="match status" value="1"/>
</dbReference>
<dbReference type="Gene3D" id="3.30.54.20">
    <property type="match status" value="1"/>
</dbReference>
<dbReference type="Gene3D" id="3.40.50.800">
    <property type="entry name" value="Anticodon-binding domain"/>
    <property type="match status" value="1"/>
</dbReference>
<dbReference type="Gene3D" id="3.30.930.10">
    <property type="entry name" value="Bira Bifunctional Protein, Domain 2"/>
    <property type="match status" value="1"/>
</dbReference>
<dbReference type="Gene3D" id="3.30.980.10">
    <property type="entry name" value="Threonyl-trna Synthetase, Chain A, domain 2"/>
    <property type="match status" value="1"/>
</dbReference>
<dbReference type="HAMAP" id="MF_00184">
    <property type="entry name" value="Thr_tRNA_synth"/>
    <property type="match status" value="1"/>
</dbReference>
<dbReference type="InterPro" id="IPR002314">
    <property type="entry name" value="aa-tRNA-synt_IIb"/>
</dbReference>
<dbReference type="InterPro" id="IPR006195">
    <property type="entry name" value="aa-tRNA-synth_II"/>
</dbReference>
<dbReference type="InterPro" id="IPR045864">
    <property type="entry name" value="aa-tRNA-synth_II/BPL/LPL"/>
</dbReference>
<dbReference type="InterPro" id="IPR004154">
    <property type="entry name" value="Anticodon-bd"/>
</dbReference>
<dbReference type="InterPro" id="IPR036621">
    <property type="entry name" value="Anticodon-bd_dom_sf"/>
</dbReference>
<dbReference type="InterPro" id="IPR012675">
    <property type="entry name" value="Beta-grasp_dom_sf"/>
</dbReference>
<dbReference type="InterPro" id="IPR004095">
    <property type="entry name" value="TGS"/>
</dbReference>
<dbReference type="InterPro" id="IPR012676">
    <property type="entry name" value="TGS-like"/>
</dbReference>
<dbReference type="InterPro" id="IPR002320">
    <property type="entry name" value="Thr-tRNA-ligase_IIa"/>
</dbReference>
<dbReference type="InterPro" id="IPR018163">
    <property type="entry name" value="Thr/Ala-tRNA-synth_IIc_edit"/>
</dbReference>
<dbReference type="InterPro" id="IPR047246">
    <property type="entry name" value="ThrRS_anticodon"/>
</dbReference>
<dbReference type="InterPro" id="IPR033728">
    <property type="entry name" value="ThrRS_core"/>
</dbReference>
<dbReference type="InterPro" id="IPR012947">
    <property type="entry name" value="tRNA_SAD"/>
</dbReference>
<dbReference type="NCBIfam" id="TIGR00418">
    <property type="entry name" value="thrS"/>
    <property type="match status" value="1"/>
</dbReference>
<dbReference type="PANTHER" id="PTHR11451:SF44">
    <property type="entry name" value="THREONINE--TRNA LIGASE, CHLOROPLASTIC_MITOCHONDRIAL 2"/>
    <property type="match status" value="1"/>
</dbReference>
<dbReference type="PANTHER" id="PTHR11451">
    <property type="entry name" value="THREONINE-TRNA LIGASE"/>
    <property type="match status" value="1"/>
</dbReference>
<dbReference type="Pfam" id="PF03129">
    <property type="entry name" value="HGTP_anticodon"/>
    <property type="match status" value="1"/>
</dbReference>
<dbReference type="Pfam" id="PF02824">
    <property type="entry name" value="TGS"/>
    <property type="match status" value="1"/>
</dbReference>
<dbReference type="Pfam" id="PF00587">
    <property type="entry name" value="tRNA-synt_2b"/>
    <property type="match status" value="1"/>
</dbReference>
<dbReference type="Pfam" id="PF07973">
    <property type="entry name" value="tRNA_SAD"/>
    <property type="match status" value="1"/>
</dbReference>
<dbReference type="PRINTS" id="PR01047">
    <property type="entry name" value="TRNASYNTHTHR"/>
</dbReference>
<dbReference type="SMART" id="SM00863">
    <property type="entry name" value="tRNA_SAD"/>
    <property type="match status" value="1"/>
</dbReference>
<dbReference type="SUPFAM" id="SSF52954">
    <property type="entry name" value="Class II aaRS ABD-related"/>
    <property type="match status" value="1"/>
</dbReference>
<dbReference type="SUPFAM" id="SSF55681">
    <property type="entry name" value="Class II aaRS and biotin synthetases"/>
    <property type="match status" value="1"/>
</dbReference>
<dbReference type="SUPFAM" id="SSF81271">
    <property type="entry name" value="TGS-like"/>
    <property type="match status" value="1"/>
</dbReference>
<dbReference type="SUPFAM" id="SSF55186">
    <property type="entry name" value="ThrRS/AlaRS common domain"/>
    <property type="match status" value="1"/>
</dbReference>
<dbReference type="PROSITE" id="PS50862">
    <property type="entry name" value="AA_TRNA_LIGASE_II"/>
    <property type="match status" value="1"/>
</dbReference>
<dbReference type="PROSITE" id="PS51880">
    <property type="entry name" value="TGS"/>
    <property type="match status" value="1"/>
</dbReference>
<protein>
    <recommendedName>
        <fullName evidence="1">Threonine--tRNA ligase</fullName>
        <ecNumber evidence="1">6.1.1.3</ecNumber>
    </recommendedName>
    <alternativeName>
        <fullName evidence="1">Threonyl-tRNA synthetase</fullName>
        <shortName evidence="1">ThrRS</shortName>
    </alternativeName>
</protein>
<gene>
    <name evidence="1" type="primary">thrS</name>
    <name type="ordered locus">FMG_0691</name>
</gene>
<name>SYT_FINM2</name>
<proteinExistence type="inferred from homology"/>
<evidence type="ECO:0000255" key="1">
    <source>
        <dbReference type="HAMAP-Rule" id="MF_00184"/>
    </source>
</evidence>
<evidence type="ECO:0000255" key="2">
    <source>
        <dbReference type="PROSITE-ProRule" id="PRU01228"/>
    </source>
</evidence>